<gene>
    <name evidence="1" type="primary">rplD</name>
    <name type="ordered locus">GWCH70_0112</name>
</gene>
<proteinExistence type="inferred from homology"/>
<name>RL4_GEOSW</name>
<organism>
    <name type="scientific">Geobacillus sp. (strain WCH70)</name>
    <dbReference type="NCBI Taxonomy" id="471223"/>
    <lineage>
        <taxon>Bacteria</taxon>
        <taxon>Bacillati</taxon>
        <taxon>Bacillota</taxon>
        <taxon>Bacilli</taxon>
        <taxon>Bacillales</taxon>
        <taxon>Anoxybacillaceae</taxon>
        <taxon>Geobacillus</taxon>
    </lineage>
</organism>
<reference key="1">
    <citation type="submission" date="2009-06" db="EMBL/GenBank/DDBJ databases">
        <title>Complete sequence of chromosome of Geopacillus sp. WCH70.</title>
        <authorList>
            <consortium name="US DOE Joint Genome Institute"/>
            <person name="Lucas S."/>
            <person name="Copeland A."/>
            <person name="Lapidus A."/>
            <person name="Glavina del Rio T."/>
            <person name="Dalin E."/>
            <person name="Tice H."/>
            <person name="Bruce D."/>
            <person name="Goodwin L."/>
            <person name="Pitluck S."/>
            <person name="Chertkov O."/>
            <person name="Brettin T."/>
            <person name="Detter J.C."/>
            <person name="Han C."/>
            <person name="Larimer F."/>
            <person name="Land M."/>
            <person name="Hauser L."/>
            <person name="Kyrpides N."/>
            <person name="Mikhailova N."/>
            <person name="Brumm P."/>
            <person name="Mead D.A."/>
            <person name="Richardson P."/>
        </authorList>
    </citation>
    <scope>NUCLEOTIDE SEQUENCE [LARGE SCALE GENOMIC DNA]</scope>
    <source>
        <strain>WCH70</strain>
    </source>
</reference>
<sequence length="207" mass="22682">MPKVALYNQSGETIGEIELNDSVFGIEPNKHVLFEAVIMQRASLRQGTHKTKNRAEVSGGGRKPWRQKGTGRARQGSIRAPQWRGGGTVFGPVPRSYSYKLPKKVRRLAIKSALSSKVLENNIVVLDNLTLEAPKTKEMVKILNNLSVDRKALIVTDDVNENVTLSARNIPGVTVVTANGINVLDVLNHDKLVITKAAVEKVEEVLA</sequence>
<dbReference type="EMBL" id="CP001638">
    <property type="protein sequence ID" value="ACS23052.1"/>
    <property type="molecule type" value="Genomic_DNA"/>
</dbReference>
<dbReference type="SMR" id="C5D3R8"/>
<dbReference type="STRING" id="471223.GWCH70_0112"/>
<dbReference type="KEGG" id="gwc:GWCH70_0112"/>
<dbReference type="eggNOG" id="COG0088">
    <property type="taxonomic scope" value="Bacteria"/>
</dbReference>
<dbReference type="HOGENOM" id="CLU_041575_5_1_9"/>
<dbReference type="OrthoDB" id="9803201at2"/>
<dbReference type="GO" id="GO:1990904">
    <property type="term" value="C:ribonucleoprotein complex"/>
    <property type="evidence" value="ECO:0007669"/>
    <property type="project" value="UniProtKB-KW"/>
</dbReference>
<dbReference type="GO" id="GO:0005840">
    <property type="term" value="C:ribosome"/>
    <property type="evidence" value="ECO:0007669"/>
    <property type="project" value="UniProtKB-KW"/>
</dbReference>
<dbReference type="GO" id="GO:0019843">
    <property type="term" value="F:rRNA binding"/>
    <property type="evidence" value="ECO:0007669"/>
    <property type="project" value="UniProtKB-UniRule"/>
</dbReference>
<dbReference type="GO" id="GO:0003735">
    <property type="term" value="F:structural constituent of ribosome"/>
    <property type="evidence" value="ECO:0007669"/>
    <property type="project" value="InterPro"/>
</dbReference>
<dbReference type="GO" id="GO:0006412">
    <property type="term" value="P:translation"/>
    <property type="evidence" value="ECO:0007669"/>
    <property type="project" value="UniProtKB-UniRule"/>
</dbReference>
<dbReference type="FunFam" id="3.40.1370.10:FF:000003">
    <property type="entry name" value="50S ribosomal protein L4"/>
    <property type="match status" value="1"/>
</dbReference>
<dbReference type="Gene3D" id="3.40.1370.10">
    <property type="match status" value="1"/>
</dbReference>
<dbReference type="HAMAP" id="MF_01328_B">
    <property type="entry name" value="Ribosomal_uL4_B"/>
    <property type="match status" value="1"/>
</dbReference>
<dbReference type="InterPro" id="IPR002136">
    <property type="entry name" value="Ribosomal_uL4"/>
</dbReference>
<dbReference type="InterPro" id="IPR013005">
    <property type="entry name" value="Ribosomal_uL4-like"/>
</dbReference>
<dbReference type="InterPro" id="IPR023574">
    <property type="entry name" value="Ribosomal_uL4_dom_sf"/>
</dbReference>
<dbReference type="NCBIfam" id="TIGR03953">
    <property type="entry name" value="rplD_bact"/>
    <property type="match status" value="1"/>
</dbReference>
<dbReference type="PANTHER" id="PTHR10746">
    <property type="entry name" value="50S RIBOSOMAL PROTEIN L4"/>
    <property type="match status" value="1"/>
</dbReference>
<dbReference type="PANTHER" id="PTHR10746:SF6">
    <property type="entry name" value="LARGE RIBOSOMAL SUBUNIT PROTEIN UL4M"/>
    <property type="match status" value="1"/>
</dbReference>
<dbReference type="Pfam" id="PF00573">
    <property type="entry name" value="Ribosomal_L4"/>
    <property type="match status" value="1"/>
</dbReference>
<dbReference type="SUPFAM" id="SSF52166">
    <property type="entry name" value="Ribosomal protein L4"/>
    <property type="match status" value="1"/>
</dbReference>
<comment type="function">
    <text evidence="1">One of the primary rRNA binding proteins, this protein initially binds near the 5'-end of the 23S rRNA. It is important during the early stages of 50S assembly. It makes multiple contacts with different domains of the 23S rRNA in the assembled 50S subunit and ribosome.</text>
</comment>
<comment type="function">
    <text evidence="1">Forms part of the polypeptide exit tunnel.</text>
</comment>
<comment type="subunit">
    <text evidence="1">Part of the 50S ribosomal subunit.</text>
</comment>
<comment type="similarity">
    <text evidence="1">Belongs to the universal ribosomal protein uL4 family.</text>
</comment>
<feature type="chain" id="PRO_1000214575" description="Large ribosomal subunit protein uL4">
    <location>
        <begin position="1"/>
        <end position="207"/>
    </location>
</feature>
<feature type="region of interest" description="Disordered" evidence="2">
    <location>
        <begin position="45"/>
        <end position="78"/>
    </location>
</feature>
<protein>
    <recommendedName>
        <fullName evidence="1">Large ribosomal subunit protein uL4</fullName>
    </recommendedName>
    <alternativeName>
        <fullName evidence="3">50S ribosomal protein L4</fullName>
    </alternativeName>
</protein>
<evidence type="ECO:0000255" key="1">
    <source>
        <dbReference type="HAMAP-Rule" id="MF_01328"/>
    </source>
</evidence>
<evidence type="ECO:0000256" key="2">
    <source>
        <dbReference type="SAM" id="MobiDB-lite"/>
    </source>
</evidence>
<evidence type="ECO:0000305" key="3"/>
<accession>C5D3R8</accession>
<keyword id="KW-0687">Ribonucleoprotein</keyword>
<keyword id="KW-0689">Ribosomal protein</keyword>
<keyword id="KW-0694">RNA-binding</keyword>
<keyword id="KW-0699">rRNA-binding</keyword>